<organism>
    <name type="scientific">Gallus gallus</name>
    <name type="common">Chicken</name>
    <dbReference type="NCBI Taxonomy" id="9031"/>
    <lineage>
        <taxon>Eukaryota</taxon>
        <taxon>Metazoa</taxon>
        <taxon>Chordata</taxon>
        <taxon>Craniata</taxon>
        <taxon>Vertebrata</taxon>
        <taxon>Euteleostomi</taxon>
        <taxon>Archelosauria</taxon>
        <taxon>Archosauria</taxon>
        <taxon>Dinosauria</taxon>
        <taxon>Saurischia</taxon>
        <taxon>Theropoda</taxon>
        <taxon>Coelurosauria</taxon>
        <taxon>Aves</taxon>
        <taxon>Neognathae</taxon>
        <taxon>Galloanserae</taxon>
        <taxon>Galliformes</taxon>
        <taxon>Phasianidae</taxon>
        <taxon>Phasianinae</taxon>
        <taxon>Gallus</taxon>
    </lineage>
</organism>
<evidence type="ECO:0000250" key="1"/>
<evidence type="ECO:0000255" key="2">
    <source>
        <dbReference type="PROSITE-ProRule" id="PRU00274"/>
    </source>
</evidence>
<evidence type="ECO:0000255" key="3">
    <source>
        <dbReference type="PROSITE-ProRule" id="PRU00302"/>
    </source>
</evidence>
<proteinExistence type="evidence at protein level"/>
<feature type="chain" id="PRO_0000027557" description="Complement factor B-like protease">
    <location>
        <begin position="1"/>
        <end position="250" status="greater than"/>
    </location>
</feature>
<feature type="chain" id="PRO_0000027558" description="Complement factor B-like protease Ba fragment">
    <location>
        <begin position="1"/>
        <end position="232"/>
    </location>
</feature>
<feature type="chain" id="PRO_0000027559" description="Complement factor B-like protease Bb fragment">
    <location>
        <begin position="233"/>
        <end position="250" status="greater than"/>
    </location>
</feature>
<feature type="domain" description="Sushi 1" evidence="3">
    <location>
        <begin position="3"/>
        <end position="73"/>
    </location>
</feature>
<feature type="domain" description="Sushi 2" evidence="3">
    <location>
        <begin position="74"/>
        <end position="133"/>
    </location>
</feature>
<feature type="domain" description="Sushi 3" evidence="3">
    <location>
        <begin position="136"/>
        <end position="193"/>
    </location>
</feature>
<feature type="glycosylation site" description="N-linked (GlcNAc...) asparagine">
    <location>
        <position position="115"/>
    </location>
</feature>
<feature type="glycosylation site" description="N-linked (GlcNAc...) asparagine">
    <location>
        <position position="221"/>
    </location>
</feature>
<feature type="disulfide bond" evidence="1">
    <location>
        <begin position="5"/>
        <end position="44"/>
    </location>
</feature>
<feature type="disulfide bond" evidence="1">
    <location>
        <begin position="30"/>
        <end position="71"/>
    </location>
</feature>
<feature type="disulfide bond" evidence="1">
    <location>
        <begin position="76"/>
        <end position="118"/>
    </location>
</feature>
<feature type="disulfide bond" evidence="1">
    <location>
        <begin position="104"/>
        <end position="131"/>
    </location>
</feature>
<feature type="disulfide bond" evidence="1">
    <location>
        <begin position="138"/>
        <end position="178"/>
    </location>
</feature>
<feature type="disulfide bond" evidence="1">
    <location>
        <begin position="164"/>
        <end position="191"/>
    </location>
</feature>
<feature type="non-terminal residue">
    <location>
        <position position="250"/>
    </location>
</feature>
<sequence>ATTRCDPTLIPIAGGWFELLEGGEALRYRCPPGHIPTPLARRSCGPDGQXEPLXXXXXXXXXXXXXXXXKCRAVWCPPPQDMEHGSFWPRLPRYPPGSRLHFQCFQGFNLRGAPNRTCGEGGRWSGVTPVCDDGSGDCPAPPVXXXXXKEGSRYLLEDTVRFRCGPGLVLLGSAVRQCLEGGVWSGTEPQCRAPLSFDTPSDVAASFMASLSQSVERADSNSSHGPTEKLPRXIRVDGSAXLNVFLLXDA</sequence>
<protein>
    <recommendedName>
        <fullName>Complement factor B-like protease</fullName>
        <ecNumber>3.4.21.-</ecNumber>
    </recommendedName>
    <component>
        <recommendedName>
            <fullName>Complement factor B-like protease Ba fragment</fullName>
        </recommendedName>
    </component>
    <component>
        <recommendedName>
            <fullName>Complement factor B-like protease Bb fragment</fullName>
        </recommendedName>
    </component>
</protein>
<accession>P81475</accession>
<comment type="function">
    <text>Required in both the classical and alternate pathways of the complement system.</text>
</comment>
<comment type="subcellular location">
    <subcellularLocation>
        <location>Secreted</location>
    </subcellularLocation>
</comment>
<comment type="tissue specificity">
    <text>Plasma.</text>
</comment>
<comment type="similarity">
    <text evidence="2">Belongs to the peptidase S1 family.</text>
</comment>
<keyword id="KW-0179">Complement alternate pathway</keyword>
<keyword id="KW-0180">Complement pathway</keyword>
<keyword id="KW-0903">Direct protein sequencing</keyword>
<keyword id="KW-1015">Disulfide bond</keyword>
<keyword id="KW-0325">Glycoprotein</keyword>
<keyword id="KW-0378">Hydrolase</keyword>
<keyword id="KW-0391">Immunity</keyword>
<keyword id="KW-0399">Innate immunity</keyword>
<keyword id="KW-0645">Protease</keyword>
<keyword id="KW-1185">Reference proteome</keyword>
<keyword id="KW-0677">Repeat</keyword>
<keyword id="KW-0964">Secreted</keyword>
<keyword id="KW-0720">Serine protease</keyword>
<keyword id="KW-0768">Sushi</keyword>
<reference key="1">
    <citation type="journal article" date="1993" name="J. Immunol.">
        <title>Structural analysis of chicken factor B-like protease and comparison with mammalian complement proteins factor B and C2.</title>
        <authorList>
            <person name="Kjalke M."/>
            <person name="Welinder K.G."/>
            <person name="Koch C."/>
        </authorList>
    </citation>
    <scope>PROTEIN SEQUENCE</scope>
    <source>
        <tissue>Plasma</tissue>
    </source>
</reference>
<name>CFBL_CHICK</name>
<dbReference type="EC" id="3.4.21.-"/>
<dbReference type="MEROPS" id="S01.196"/>
<dbReference type="GlyGen" id="P81475">
    <property type="glycosylation" value="2 sites"/>
</dbReference>
<dbReference type="VEuPathDB" id="HostDB:geneid_419574"/>
<dbReference type="InParanoid" id="P81475"/>
<dbReference type="PhylomeDB" id="P81475"/>
<dbReference type="Reactome" id="R-GGA-2132263">
    <property type="pathway name" value="Creation of classical C3 convertase"/>
</dbReference>
<dbReference type="Reactome" id="R-GGA-2132273">
    <property type="pathway name" value="Formation of membrane-bound convertase C3"/>
</dbReference>
<dbReference type="Reactome" id="R-GGA-2132281">
    <property type="pathway name" value="Regulation of complement cascades"/>
</dbReference>
<dbReference type="Reactome" id="R-GGA-2132285">
    <property type="pathway name" value="Complement Cascade"/>
</dbReference>
<dbReference type="Reactome" id="R-GGA-2132293">
    <property type="pathway name" value="Formation of fluid-phase convertase C3"/>
</dbReference>
<dbReference type="Proteomes" id="UP000000539">
    <property type="component" value="Unassembled WGS sequence"/>
</dbReference>
<dbReference type="GO" id="GO:0005576">
    <property type="term" value="C:extracellular region"/>
    <property type="evidence" value="ECO:0000304"/>
    <property type="project" value="Reactome"/>
</dbReference>
<dbReference type="GO" id="GO:0008236">
    <property type="term" value="F:serine-type peptidase activity"/>
    <property type="evidence" value="ECO:0007669"/>
    <property type="project" value="UniProtKB-KW"/>
</dbReference>
<dbReference type="GO" id="GO:0006957">
    <property type="term" value="P:complement activation, alternative pathway"/>
    <property type="evidence" value="ECO:0007669"/>
    <property type="project" value="UniProtKB-KW"/>
</dbReference>
<dbReference type="GO" id="GO:0006958">
    <property type="term" value="P:complement activation, classical pathway"/>
    <property type="evidence" value="ECO:0007669"/>
    <property type="project" value="UniProtKB-KW"/>
</dbReference>
<dbReference type="GO" id="GO:0006508">
    <property type="term" value="P:proteolysis"/>
    <property type="evidence" value="ECO:0007669"/>
    <property type="project" value="UniProtKB-KW"/>
</dbReference>
<dbReference type="CDD" id="cd00033">
    <property type="entry name" value="CCP"/>
    <property type="match status" value="2"/>
</dbReference>
<dbReference type="Gene3D" id="2.10.70.10">
    <property type="entry name" value="Complement Module, domain 1"/>
    <property type="match status" value="3"/>
</dbReference>
<dbReference type="InterPro" id="IPR035976">
    <property type="entry name" value="Sushi/SCR/CCP_sf"/>
</dbReference>
<dbReference type="InterPro" id="IPR000436">
    <property type="entry name" value="Sushi_SCR_CCP_dom"/>
</dbReference>
<dbReference type="PANTHER" id="PTHR46393:SF2">
    <property type="entry name" value="COMPLEMENT C2"/>
    <property type="match status" value="1"/>
</dbReference>
<dbReference type="PANTHER" id="PTHR46393">
    <property type="entry name" value="SUSHI DOMAIN-CONTAINING PROTEIN"/>
    <property type="match status" value="1"/>
</dbReference>
<dbReference type="Pfam" id="PF00084">
    <property type="entry name" value="Sushi"/>
    <property type="match status" value="2"/>
</dbReference>
<dbReference type="SMART" id="SM00032">
    <property type="entry name" value="CCP"/>
    <property type="match status" value="2"/>
</dbReference>
<dbReference type="SUPFAM" id="SSF57535">
    <property type="entry name" value="Complement control module/SCR domain"/>
    <property type="match status" value="2"/>
</dbReference>
<dbReference type="PROSITE" id="PS50923">
    <property type="entry name" value="SUSHI"/>
    <property type="match status" value="3"/>
</dbReference>